<evidence type="ECO:0000255" key="1">
    <source>
        <dbReference type="HAMAP-Rule" id="MF_00145"/>
    </source>
</evidence>
<comment type="catalytic activity">
    <reaction evidence="1">
        <text>(2R)-3-phosphoglycerate + ATP = (2R)-3-phospho-glyceroyl phosphate + ADP</text>
        <dbReference type="Rhea" id="RHEA:14801"/>
        <dbReference type="ChEBI" id="CHEBI:30616"/>
        <dbReference type="ChEBI" id="CHEBI:57604"/>
        <dbReference type="ChEBI" id="CHEBI:58272"/>
        <dbReference type="ChEBI" id="CHEBI:456216"/>
        <dbReference type="EC" id="2.7.2.3"/>
    </reaction>
</comment>
<comment type="pathway">
    <text evidence="1">Carbohydrate degradation; glycolysis; pyruvate from D-glyceraldehyde 3-phosphate: step 2/5.</text>
</comment>
<comment type="subunit">
    <text evidence="1">Monomer.</text>
</comment>
<comment type="subcellular location">
    <subcellularLocation>
        <location evidence="1">Cytoplasm</location>
    </subcellularLocation>
</comment>
<comment type="similarity">
    <text evidence="1">Belongs to the phosphoglycerate kinase family.</text>
</comment>
<keyword id="KW-0067">ATP-binding</keyword>
<keyword id="KW-0963">Cytoplasm</keyword>
<keyword id="KW-0324">Glycolysis</keyword>
<keyword id="KW-0418">Kinase</keyword>
<keyword id="KW-0547">Nucleotide-binding</keyword>
<keyword id="KW-1185">Reference proteome</keyword>
<keyword id="KW-0808">Transferase</keyword>
<sequence>MAIKTVQDLINEGVQGRHVLVRADLNVPLSDGNITDPGRIDASVPTLKALLEAGARVVVSAHLGRPKGEFKEEFSLAPVAEALAERLDQWVPLATDVTGEDAHERANGLDDGDILLLENVRFDARETSKDETERTEFAAELAALTGDNGAFVSDGFGVVHRKQASVYDVAKKLPHYAGGLVEAELNVLRKVSEAPEKPYAVVLGGSKVSDKLGVIEALAPRVDNLIIGGGMCFTFLAAKGYEVGGSLLQEDMIDTCKDLLERFGDVIALPTDVVVAERFDKDADHRTVDLNSIPEGWMGLDIGPESVKAFAEVLSKSKTVFWNGPMGVFEFPAFAEGTRGVAQAIIDATAAGAFSVVGGGDSAAAVRTLGLNEEGFSHISTGGGASLEFLEGKELPGVSVLES</sequence>
<proteinExistence type="inferred from homology"/>
<name>PGK_CORJK</name>
<reference key="1">
    <citation type="journal article" date="2005" name="J. Bacteriol.">
        <title>Complete genome sequence and analysis of the multiresistant nosocomial pathogen Corynebacterium jeikeium K411, a lipid-requiring bacterium of the human skin flora.</title>
        <authorList>
            <person name="Tauch A."/>
            <person name="Kaiser O."/>
            <person name="Hain T."/>
            <person name="Goesmann A."/>
            <person name="Weisshaar B."/>
            <person name="Albersmeier A."/>
            <person name="Bekel T."/>
            <person name="Bischoff N."/>
            <person name="Brune I."/>
            <person name="Chakraborty T."/>
            <person name="Kalinowski J."/>
            <person name="Meyer F."/>
            <person name="Rupp O."/>
            <person name="Schneiker S."/>
            <person name="Viehoever P."/>
            <person name="Puehler A."/>
        </authorList>
    </citation>
    <scope>NUCLEOTIDE SEQUENCE [LARGE SCALE GENOMIC DNA]</scope>
    <source>
        <strain>K411</strain>
    </source>
</reference>
<dbReference type="EC" id="2.7.2.3" evidence="1"/>
<dbReference type="EMBL" id="CR931997">
    <property type="protein sequence ID" value="CAI37164.1"/>
    <property type="molecule type" value="Genomic_DNA"/>
</dbReference>
<dbReference type="RefSeq" id="WP_005294821.1">
    <property type="nucleotide sequence ID" value="NC_007164.1"/>
</dbReference>
<dbReference type="SMR" id="Q4JVJ3"/>
<dbReference type="STRING" id="306537.jk1000"/>
<dbReference type="GeneID" id="92738514"/>
<dbReference type="KEGG" id="cjk:jk1000"/>
<dbReference type="eggNOG" id="COG0126">
    <property type="taxonomic scope" value="Bacteria"/>
</dbReference>
<dbReference type="HOGENOM" id="CLU_025427_0_2_11"/>
<dbReference type="OrthoDB" id="9808460at2"/>
<dbReference type="UniPathway" id="UPA00109">
    <property type="reaction ID" value="UER00185"/>
</dbReference>
<dbReference type="Proteomes" id="UP000000545">
    <property type="component" value="Chromosome"/>
</dbReference>
<dbReference type="GO" id="GO:0005829">
    <property type="term" value="C:cytosol"/>
    <property type="evidence" value="ECO:0007669"/>
    <property type="project" value="TreeGrafter"/>
</dbReference>
<dbReference type="GO" id="GO:0043531">
    <property type="term" value="F:ADP binding"/>
    <property type="evidence" value="ECO:0007669"/>
    <property type="project" value="TreeGrafter"/>
</dbReference>
<dbReference type="GO" id="GO:0005524">
    <property type="term" value="F:ATP binding"/>
    <property type="evidence" value="ECO:0007669"/>
    <property type="project" value="UniProtKB-KW"/>
</dbReference>
<dbReference type="GO" id="GO:0004618">
    <property type="term" value="F:phosphoglycerate kinase activity"/>
    <property type="evidence" value="ECO:0007669"/>
    <property type="project" value="UniProtKB-UniRule"/>
</dbReference>
<dbReference type="GO" id="GO:0006094">
    <property type="term" value="P:gluconeogenesis"/>
    <property type="evidence" value="ECO:0007669"/>
    <property type="project" value="TreeGrafter"/>
</dbReference>
<dbReference type="GO" id="GO:0006096">
    <property type="term" value="P:glycolytic process"/>
    <property type="evidence" value="ECO:0007669"/>
    <property type="project" value="UniProtKB-UniRule"/>
</dbReference>
<dbReference type="CDD" id="cd00318">
    <property type="entry name" value="Phosphoglycerate_kinase"/>
    <property type="match status" value="1"/>
</dbReference>
<dbReference type="FunFam" id="3.40.50.1260:FF:000003">
    <property type="entry name" value="Phosphoglycerate kinase"/>
    <property type="match status" value="1"/>
</dbReference>
<dbReference type="FunFam" id="3.40.50.1260:FF:000006">
    <property type="entry name" value="Phosphoglycerate kinase"/>
    <property type="match status" value="1"/>
</dbReference>
<dbReference type="Gene3D" id="3.40.50.1260">
    <property type="entry name" value="Phosphoglycerate kinase, N-terminal domain"/>
    <property type="match status" value="2"/>
</dbReference>
<dbReference type="HAMAP" id="MF_00145">
    <property type="entry name" value="Phosphoglyc_kinase"/>
    <property type="match status" value="1"/>
</dbReference>
<dbReference type="InterPro" id="IPR001576">
    <property type="entry name" value="Phosphoglycerate_kinase"/>
</dbReference>
<dbReference type="InterPro" id="IPR015911">
    <property type="entry name" value="Phosphoglycerate_kinase_CS"/>
</dbReference>
<dbReference type="InterPro" id="IPR015824">
    <property type="entry name" value="Phosphoglycerate_kinase_N"/>
</dbReference>
<dbReference type="InterPro" id="IPR036043">
    <property type="entry name" value="Phosphoglycerate_kinase_sf"/>
</dbReference>
<dbReference type="PANTHER" id="PTHR11406">
    <property type="entry name" value="PHOSPHOGLYCERATE KINASE"/>
    <property type="match status" value="1"/>
</dbReference>
<dbReference type="PANTHER" id="PTHR11406:SF23">
    <property type="entry name" value="PHOSPHOGLYCERATE KINASE 1, CHLOROPLASTIC-RELATED"/>
    <property type="match status" value="1"/>
</dbReference>
<dbReference type="Pfam" id="PF00162">
    <property type="entry name" value="PGK"/>
    <property type="match status" value="1"/>
</dbReference>
<dbReference type="PIRSF" id="PIRSF000724">
    <property type="entry name" value="Pgk"/>
    <property type="match status" value="1"/>
</dbReference>
<dbReference type="PRINTS" id="PR00477">
    <property type="entry name" value="PHGLYCKINASE"/>
</dbReference>
<dbReference type="SUPFAM" id="SSF53748">
    <property type="entry name" value="Phosphoglycerate kinase"/>
    <property type="match status" value="1"/>
</dbReference>
<dbReference type="PROSITE" id="PS00111">
    <property type="entry name" value="PGLYCERATE_KINASE"/>
    <property type="match status" value="1"/>
</dbReference>
<feature type="chain" id="PRO_1000009613" description="Phosphoglycerate kinase">
    <location>
        <begin position="1"/>
        <end position="403"/>
    </location>
</feature>
<feature type="binding site" evidence="1">
    <location>
        <begin position="24"/>
        <end position="26"/>
    </location>
    <ligand>
        <name>substrate</name>
    </ligand>
</feature>
<feature type="binding site" evidence="1">
    <location>
        <position position="39"/>
    </location>
    <ligand>
        <name>substrate</name>
    </ligand>
</feature>
<feature type="binding site" evidence="1">
    <location>
        <begin position="62"/>
        <end position="65"/>
    </location>
    <ligand>
        <name>substrate</name>
    </ligand>
</feature>
<feature type="binding site" evidence="1">
    <location>
        <position position="121"/>
    </location>
    <ligand>
        <name>substrate</name>
    </ligand>
</feature>
<feature type="binding site" evidence="1">
    <location>
        <position position="161"/>
    </location>
    <ligand>
        <name>substrate</name>
    </ligand>
</feature>
<feature type="binding site" evidence="1">
    <location>
        <position position="211"/>
    </location>
    <ligand>
        <name>ATP</name>
        <dbReference type="ChEBI" id="CHEBI:30616"/>
    </ligand>
</feature>
<feature type="binding site" evidence="1">
    <location>
        <position position="299"/>
    </location>
    <ligand>
        <name>ATP</name>
        <dbReference type="ChEBI" id="CHEBI:30616"/>
    </ligand>
</feature>
<feature type="binding site" evidence="1">
    <location>
        <position position="330"/>
    </location>
    <ligand>
        <name>ATP</name>
        <dbReference type="ChEBI" id="CHEBI:30616"/>
    </ligand>
</feature>
<feature type="binding site" evidence="1">
    <location>
        <begin position="359"/>
        <end position="362"/>
    </location>
    <ligand>
        <name>ATP</name>
        <dbReference type="ChEBI" id="CHEBI:30616"/>
    </ligand>
</feature>
<accession>Q4JVJ3</accession>
<organism>
    <name type="scientific">Corynebacterium jeikeium (strain K411)</name>
    <dbReference type="NCBI Taxonomy" id="306537"/>
    <lineage>
        <taxon>Bacteria</taxon>
        <taxon>Bacillati</taxon>
        <taxon>Actinomycetota</taxon>
        <taxon>Actinomycetes</taxon>
        <taxon>Mycobacteriales</taxon>
        <taxon>Corynebacteriaceae</taxon>
        <taxon>Corynebacterium</taxon>
    </lineage>
</organism>
<protein>
    <recommendedName>
        <fullName evidence="1">Phosphoglycerate kinase</fullName>
        <ecNumber evidence="1">2.7.2.3</ecNumber>
    </recommendedName>
</protein>
<gene>
    <name evidence="1" type="primary">pgk</name>
    <name type="ordered locus">jk1000</name>
</gene>